<feature type="chain" id="PRO_0000372459" description="Probable heme-iron transport system permease protein IsdF">
    <location>
        <begin position="1"/>
        <end position="322"/>
    </location>
</feature>
<feature type="transmembrane region" description="Helical" evidence="2">
    <location>
        <begin position="9"/>
        <end position="29"/>
    </location>
</feature>
<feature type="transmembrane region" description="Helical" evidence="2">
    <location>
        <begin position="61"/>
        <end position="81"/>
    </location>
</feature>
<feature type="transmembrane region" description="Helical" evidence="2">
    <location>
        <begin position="89"/>
        <end position="109"/>
    </location>
</feature>
<feature type="transmembrane region" description="Helical" evidence="2">
    <location>
        <begin position="114"/>
        <end position="134"/>
    </location>
</feature>
<feature type="transmembrane region" description="Helical" evidence="2">
    <location>
        <begin position="143"/>
        <end position="163"/>
    </location>
</feature>
<feature type="transmembrane region" description="Helical" evidence="2">
    <location>
        <begin position="179"/>
        <end position="199"/>
    </location>
</feature>
<feature type="transmembrane region" description="Helical" evidence="2">
    <location>
        <begin position="233"/>
        <end position="253"/>
    </location>
</feature>
<feature type="transmembrane region" description="Helical" evidence="2">
    <location>
        <begin position="267"/>
        <end position="287"/>
    </location>
</feature>
<feature type="transmembrane region" description="Helical" evidence="2">
    <location>
        <begin position="294"/>
        <end position="314"/>
    </location>
</feature>
<reference key="1">
    <citation type="journal article" date="2006" name="Lancet">
        <title>Complete genome sequence of USA300, an epidemic clone of community-acquired meticillin-resistant Staphylococcus aureus.</title>
        <authorList>
            <person name="Diep B.A."/>
            <person name="Gill S.R."/>
            <person name="Chang R.F."/>
            <person name="Phan T.H."/>
            <person name="Chen J.H."/>
            <person name="Davidson M.G."/>
            <person name="Lin F."/>
            <person name="Lin J."/>
            <person name="Carleton H.A."/>
            <person name="Mongodin E.F."/>
            <person name="Sensabaugh G.F."/>
            <person name="Perdreau-Remington F."/>
        </authorList>
    </citation>
    <scope>NUCLEOTIDE SEQUENCE [LARGE SCALE GENOMIC DNA]</scope>
    <source>
        <strain>USA300</strain>
    </source>
</reference>
<keyword id="KW-1003">Cell membrane</keyword>
<keyword id="KW-0408">Iron</keyword>
<keyword id="KW-0472">Membrane</keyword>
<keyword id="KW-0812">Transmembrane</keyword>
<keyword id="KW-1133">Transmembrane helix</keyword>
<keyword id="KW-0813">Transport</keyword>
<organism>
    <name type="scientific">Staphylococcus aureus (strain USA300)</name>
    <dbReference type="NCBI Taxonomy" id="367830"/>
    <lineage>
        <taxon>Bacteria</taxon>
        <taxon>Bacillati</taxon>
        <taxon>Bacillota</taxon>
        <taxon>Bacilli</taxon>
        <taxon>Bacillales</taxon>
        <taxon>Staphylococcaceae</taxon>
        <taxon>Staphylococcus</taxon>
    </lineage>
</organism>
<name>ISDF_STAA3</name>
<protein>
    <recommendedName>
        <fullName>Probable heme-iron transport system permease protein IsdF</fullName>
    </recommendedName>
    <alternativeName>
        <fullName>Iron-regulated surface determinant protein F</fullName>
    </alternativeName>
    <alternativeName>
        <fullName>Staphylococcal iron-regulated protein G</fullName>
    </alternativeName>
</protein>
<evidence type="ECO:0000250" key="1"/>
<evidence type="ECO:0000255" key="2"/>
<evidence type="ECO:0000305" key="3"/>
<proteinExistence type="inferred from homology"/>
<sequence length="322" mass="35175">MMIKNKKKLLFLCLLVILIATAYISFVTGTIKLSFNDLFTKFTTGSNEAVDSIIDLRLPRILIALMVGAMLAVSGALLQAALQNPLAEANIIGVSSGALIMRALCMLFIPQLYFYLPLLSFIGGLIPFLIIILLHSKFRFNAVSMILVGVALFVLLNGVLEILTQNPLMKIPQGLTMKIWSDVYILAVSALLGLILTLLLSPKLNLLNLDDIQARSIGFNIDRYRWLTGLLAVFLASATVAIVGQLAFLGIIVPHVVRKLVGGNYRVLIPFSTVIGAWLLLVADLLGRVIQPPLEIPANAILMIVGGPMLIYLICQSQRNRI</sequence>
<dbReference type="EMBL" id="CP000255">
    <property type="protein sequence ID" value="ABD21472.1"/>
    <property type="status" value="ALT_INIT"/>
    <property type="molecule type" value="Genomic_DNA"/>
</dbReference>
<dbReference type="SMR" id="Q2FHU7"/>
<dbReference type="KEGG" id="saa:SAUSA300_1033"/>
<dbReference type="HOGENOM" id="CLU_013016_1_1_9"/>
<dbReference type="Proteomes" id="UP000001939">
    <property type="component" value="Chromosome"/>
</dbReference>
<dbReference type="GO" id="GO:0005886">
    <property type="term" value="C:plasma membrane"/>
    <property type="evidence" value="ECO:0007669"/>
    <property type="project" value="UniProtKB-SubCell"/>
</dbReference>
<dbReference type="GO" id="GO:0022857">
    <property type="term" value="F:transmembrane transporter activity"/>
    <property type="evidence" value="ECO:0007669"/>
    <property type="project" value="InterPro"/>
</dbReference>
<dbReference type="GO" id="GO:0033214">
    <property type="term" value="P:siderophore-dependent iron import into cell"/>
    <property type="evidence" value="ECO:0007669"/>
    <property type="project" value="TreeGrafter"/>
</dbReference>
<dbReference type="CDD" id="cd06550">
    <property type="entry name" value="TM_ABC_iron-siderophores_like"/>
    <property type="match status" value="1"/>
</dbReference>
<dbReference type="FunFam" id="1.10.3470.10:FF:000001">
    <property type="entry name" value="Vitamin B12 ABC transporter permease BtuC"/>
    <property type="match status" value="1"/>
</dbReference>
<dbReference type="Gene3D" id="1.10.3470.10">
    <property type="entry name" value="ABC transporter involved in vitamin B12 uptake, BtuC"/>
    <property type="match status" value="1"/>
</dbReference>
<dbReference type="InterPro" id="IPR037294">
    <property type="entry name" value="ABC_BtuC-like"/>
</dbReference>
<dbReference type="InterPro" id="IPR000522">
    <property type="entry name" value="ABC_transptr_permease_BtuC"/>
</dbReference>
<dbReference type="PANTHER" id="PTHR30472">
    <property type="entry name" value="FERRIC ENTEROBACTIN TRANSPORT SYSTEM PERMEASE PROTEIN"/>
    <property type="match status" value="1"/>
</dbReference>
<dbReference type="PANTHER" id="PTHR30472:SF21">
    <property type="entry name" value="HEME-IRON TRANSPORT SYSTEM PERMEASE PROTEIN ISDF-RELATED"/>
    <property type="match status" value="1"/>
</dbReference>
<dbReference type="Pfam" id="PF01032">
    <property type="entry name" value="FecCD"/>
    <property type="match status" value="1"/>
</dbReference>
<dbReference type="SUPFAM" id="SSF81345">
    <property type="entry name" value="ABC transporter involved in vitamin B12 uptake, BtuC"/>
    <property type="match status" value="1"/>
</dbReference>
<gene>
    <name type="primary">isdF</name>
    <name type="synonym">sirG</name>
    <name type="ordered locus">SAUSA300_1033</name>
</gene>
<comment type="function">
    <text evidence="1">Part of the binding-protein-dependent transport system for heme-iron. Responsible for the translocation of the substrate across the membrane (By similarity).</text>
</comment>
<comment type="subcellular location">
    <subcellularLocation>
        <location evidence="3">Cell membrane</location>
        <topology evidence="3">Multi-pass membrane protein</topology>
    </subcellularLocation>
</comment>
<comment type="induction">
    <text evidence="1">Repressed by fur in the presence of iron.</text>
</comment>
<comment type="similarity">
    <text evidence="3">Belongs to the binding-protein-dependent transport system permease family. FecCD subfamily.</text>
</comment>
<comment type="sequence caution" evidence="3">
    <conflict type="erroneous initiation">
        <sequence resource="EMBL-CDS" id="ABD21472"/>
    </conflict>
</comment>
<accession>Q2FHU7</accession>